<proteinExistence type="evidence at transcript level"/>
<sequence>MSHGHSHGGGCSCESEPSDGPERGLEYGLFRKIDLDKLQCLNESREGSGRSVFRAWEERNDRTRFVESDDDEELLFNIPFTGNVKLKGIVLIGEDSDTHPAELRLFKNVPHMSFDDTGREADQTFSLNIDVNGNLEYPTKIARFSNVSHLSIHISKNFGAENTKIYYIGLRGEWTEAHRHEVTICNYEAAANPADHKVSQITPQTNFIS</sequence>
<dbReference type="EMBL" id="BC075194">
    <property type="protein sequence ID" value="AAH75194.1"/>
    <property type="molecule type" value="mRNA"/>
</dbReference>
<dbReference type="RefSeq" id="NP_001086378.1">
    <property type="nucleotide sequence ID" value="NM_001092909.1"/>
</dbReference>
<dbReference type="SMR" id="Q6DJI5"/>
<dbReference type="BioGRID" id="102970">
    <property type="interactions" value="1"/>
</dbReference>
<dbReference type="GeneID" id="444807"/>
<dbReference type="KEGG" id="xla:444807"/>
<dbReference type="AGR" id="Xenbase:XB-GENE-1000971"/>
<dbReference type="CTD" id="444807"/>
<dbReference type="Xenbase" id="XB-GENE-1000971">
    <property type="gene designation" value="pithd1.L"/>
</dbReference>
<dbReference type="OMA" id="RLVFKPW"/>
<dbReference type="OrthoDB" id="2635at2759"/>
<dbReference type="Proteomes" id="UP000186698">
    <property type="component" value="Chromosome 2L"/>
</dbReference>
<dbReference type="Bgee" id="444807">
    <property type="expression patterns" value="Expressed in internal ear and 19 other cell types or tissues"/>
</dbReference>
<dbReference type="GO" id="GO:0005737">
    <property type="term" value="C:cytoplasm"/>
    <property type="evidence" value="ECO:0000250"/>
    <property type="project" value="UniProtKB"/>
</dbReference>
<dbReference type="GO" id="GO:0005634">
    <property type="term" value="C:nucleus"/>
    <property type="evidence" value="ECO:0000318"/>
    <property type="project" value="GO_Central"/>
</dbReference>
<dbReference type="GO" id="GO:0045893">
    <property type="term" value="P:positive regulation of DNA-templated transcription"/>
    <property type="evidence" value="ECO:0000250"/>
    <property type="project" value="UniProtKB"/>
</dbReference>
<dbReference type="GO" id="GO:0045654">
    <property type="term" value="P:positive regulation of megakaryocyte differentiation"/>
    <property type="evidence" value="ECO:0000250"/>
    <property type="project" value="UniProtKB"/>
</dbReference>
<dbReference type="FunFam" id="2.60.120.470:FF:000002">
    <property type="entry name" value="PITH domain-containing protein 1"/>
    <property type="match status" value="1"/>
</dbReference>
<dbReference type="Gene3D" id="2.60.120.470">
    <property type="entry name" value="PITH domain"/>
    <property type="match status" value="1"/>
</dbReference>
<dbReference type="InterPro" id="IPR008979">
    <property type="entry name" value="Galactose-bd-like_sf"/>
</dbReference>
<dbReference type="InterPro" id="IPR045099">
    <property type="entry name" value="PITH1-like"/>
</dbReference>
<dbReference type="InterPro" id="IPR010400">
    <property type="entry name" value="PITH_dom"/>
</dbReference>
<dbReference type="InterPro" id="IPR037047">
    <property type="entry name" value="PITH_dom_sf"/>
</dbReference>
<dbReference type="PANTHER" id="PTHR12175">
    <property type="entry name" value="AD039 HT014 THIOREDOXIN FAMILY TRP26"/>
    <property type="match status" value="1"/>
</dbReference>
<dbReference type="PANTHER" id="PTHR12175:SF1">
    <property type="entry name" value="PITH DOMAIN-CONTAINING PROTEIN 1"/>
    <property type="match status" value="1"/>
</dbReference>
<dbReference type="Pfam" id="PF06201">
    <property type="entry name" value="PITH"/>
    <property type="match status" value="1"/>
</dbReference>
<dbReference type="SUPFAM" id="SSF49785">
    <property type="entry name" value="Galactose-binding domain-like"/>
    <property type="match status" value="1"/>
</dbReference>
<dbReference type="PROSITE" id="PS51532">
    <property type="entry name" value="PITH"/>
    <property type="match status" value="1"/>
</dbReference>
<keyword id="KW-0010">Activator</keyword>
<keyword id="KW-0963">Cytoplasm</keyword>
<keyword id="KW-1185">Reference proteome</keyword>
<keyword id="KW-0804">Transcription</keyword>
<keyword id="KW-0805">Transcription regulation</keyword>
<evidence type="ECO:0000250" key="1">
    <source>
        <dbReference type="UniProtKB" id="Q9GZP4"/>
    </source>
</evidence>
<evidence type="ECO:0000255" key="2">
    <source>
        <dbReference type="PROSITE-ProRule" id="PRU00864"/>
    </source>
</evidence>
<evidence type="ECO:0000305" key="3"/>
<comment type="function">
    <text evidence="1">May play a role in promoting megakaryocyte differentiation by up-regulating RUNX1 expression.</text>
</comment>
<comment type="subcellular location">
    <subcellularLocation>
        <location evidence="1">Cytoplasm</location>
    </subcellularLocation>
</comment>
<comment type="similarity">
    <text evidence="3">Belongs to the PITHD1 family.</text>
</comment>
<name>PITH1_XENLA</name>
<organism>
    <name type="scientific">Xenopus laevis</name>
    <name type="common">African clawed frog</name>
    <dbReference type="NCBI Taxonomy" id="8355"/>
    <lineage>
        <taxon>Eukaryota</taxon>
        <taxon>Metazoa</taxon>
        <taxon>Chordata</taxon>
        <taxon>Craniata</taxon>
        <taxon>Vertebrata</taxon>
        <taxon>Euteleostomi</taxon>
        <taxon>Amphibia</taxon>
        <taxon>Batrachia</taxon>
        <taxon>Anura</taxon>
        <taxon>Pipoidea</taxon>
        <taxon>Pipidae</taxon>
        <taxon>Xenopodinae</taxon>
        <taxon>Xenopus</taxon>
        <taxon>Xenopus</taxon>
    </lineage>
</organism>
<feature type="chain" id="PRO_0000285035" description="PITH domain-containing protein 1">
    <location>
        <begin position="1"/>
        <end position="209"/>
    </location>
</feature>
<feature type="domain" description="PITH" evidence="2">
    <location>
        <begin position="18"/>
        <end position="190"/>
    </location>
</feature>
<protein>
    <recommendedName>
        <fullName>PITH domain-containing protein 1</fullName>
    </recommendedName>
</protein>
<reference key="1">
    <citation type="submission" date="2004-06" db="EMBL/GenBank/DDBJ databases">
        <authorList>
            <consortium name="NIH - Xenopus Gene Collection (XGC) project"/>
        </authorList>
    </citation>
    <scope>NUCLEOTIDE SEQUENCE [LARGE SCALE MRNA]</scope>
    <source>
        <tissue>Kidney</tissue>
    </source>
</reference>
<gene>
    <name type="primary">pithd1</name>
</gene>
<accession>Q6DJI5</accession>